<organism>
    <name type="scientific">Pan troglodytes</name>
    <name type="common">Chimpanzee</name>
    <dbReference type="NCBI Taxonomy" id="9598"/>
    <lineage>
        <taxon>Eukaryota</taxon>
        <taxon>Metazoa</taxon>
        <taxon>Chordata</taxon>
        <taxon>Craniata</taxon>
        <taxon>Vertebrata</taxon>
        <taxon>Euteleostomi</taxon>
        <taxon>Mammalia</taxon>
        <taxon>Eutheria</taxon>
        <taxon>Euarchontoglires</taxon>
        <taxon>Primates</taxon>
        <taxon>Haplorrhini</taxon>
        <taxon>Catarrhini</taxon>
        <taxon>Hominidae</taxon>
        <taxon>Pan</taxon>
    </lineage>
</organism>
<feature type="signal peptide" evidence="8">
    <location>
        <begin position="1"/>
        <end position="23"/>
    </location>
</feature>
<feature type="propeptide" id="PRO_0000285416" evidence="7">
    <location>
        <begin position="24"/>
        <end position="51"/>
    </location>
</feature>
<feature type="chain" id="PRO_0000148902" description="Osteocalcin">
    <location>
        <begin position="52"/>
        <end position="100"/>
    </location>
</feature>
<feature type="domain" description="Gla" evidence="6">
    <location>
        <begin position="52"/>
        <end position="98"/>
    </location>
</feature>
<feature type="binding site" evidence="3">
    <location>
        <position position="68"/>
    </location>
    <ligand>
        <name>Ca(2+)</name>
        <dbReference type="ChEBI" id="CHEBI:29108"/>
        <label>1</label>
    </ligand>
</feature>
<feature type="binding site" evidence="3">
    <location>
        <position position="72"/>
    </location>
    <ligand>
        <name>Ca(2+)</name>
        <dbReference type="ChEBI" id="CHEBI:29108"/>
        <label>2</label>
    </ligand>
</feature>
<feature type="binding site" evidence="3">
    <location>
        <position position="75"/>
    </location>
    <ligand>
        <name>Ca(2+)</name>
        <dbReference type="ChEBI" id="CHEBI:29108"/>
        <label>2</label>
    </ligand>
</feature>
<feature type="binding site" evidence="3">
    <location>
        <position position="75"/>
    </location>
    <ligand>
        <name>Ca(2+)</name>
        <dbReference type="ChEBI" id="CHEBI:29108"/>
        <label>3</label>
    </ligand>
</feature>
<feature type="binding site" evidence="3">
    <location>
        <position position="81"/>
    </location>
    <ligand>
        <name>Ca(2+)</name>
        <dbReference type="ChEBI" id="CHEBI:29108"/>
        <label>3</label>
    </ligand>
</feature>
<feature type="modified residue" description="4-carboxyglutamate" evidence="1 6">
    <location>
        <position position="68"/>
    </location>
</feature>
<feature type="modified residue" description="4-carboxyglutamate" evidence="4 6">
    <location>
        <position position="72"/>
    </location>
</feature>
<feature type="modified residue" description="4-carboxyglutamate" evidence="4 6">
    <location>
        <position position="75"/>
    </location>
</feature>
<feature type="disulfide bond" evidence="6">
    <location>
        <begin position="74"/>
        <end position="80"/>
    </location>
</feature>
<name>OSTCN_PANTR</name>
<reference key="1">
    <citation type="submission" date="2006-08" db="EMBL/GenBank/DDBJ databases">
        <title>Positive selection in transcription factor genes on the human lineage.</title>
        <authorList>
            <person name="Nickel G.C."/>
            <person name="Tefft D.L."/>
            <person name="Trevarthen K."/>
            <person name="Funt J."/>
            <person name="Adams M.D."/>
        </authorList>
    </citation>
    <scope>NUCLEOTIDE SEQUENCE [GENOMIC DNA]</scope>
</reference>
<reference evidence="8" key="2">
    <citation type="journal article" date="2005" name="Proc. Natl. Acad. Sci. U.S.A.">
        <title>Osteocalcin protein sequences of Neanderthals and modern primates.</title>
        <authorList>
            <person name="Nielsen-Marsh C.M."/>
            <person name="Richards M.P."/>
            <person name="Hauschka P.V."/>
            <person name="Thomas-Oates J.E."/>
            <person name="Trinkaus E."/>
            <person name="Pettit P.B."/>
            <person name="Karavanic I."/>
            <person name="Poinar H."/>
            <person name="Collins M.J."/>
        </authorList>
    </citation>
    <scope>PROTEIN SEQUENCE OF 52-100</scope>
    <source>
        <tissue evidence="7">Bone</tissue>
    </source>
</reference>
<comment type="function">
    <text evidence="5">The carboxylated form is one of the main organic components of the bone matrix, which constitutes 1-2% of the total bone protein: it acts as a negative regulator of bone formation and is required to limit bone formation without impairing bone resorption or mineralization. The carboxylated form binds strongly to apatite and calcium.</text>
</comment>
<comment type="function">
    <text evidence="5">The uncarboxylated form acts as a hormone secreted by osteoblasts, which regulates different cellular processes, such as energy metabolism, male fertility and brain development. Regulates of energy metabolism by acting as a hormone favoring pancreatic beta-cell proliferation, insulin secretion and sensitivity and energy expenditure. Uncarboxylated osteocalcin hormone also promotes testosterone production in the testes: acts as a ligand for G protein-coupled receptor GPRC6A at the surface of Leydig cells, initiating a signaling response that promotes the expression of enzymes required for testosterone synthesis in a CREB-dependent manner. Also acts as a regulator of brain development: osteocalcin hormone crosses the blood-brain barrier and acts as a ligand for GPR158 on neurons, initiating a signaling response that prevents neuronal apoptosis in the hippocampus, favors the synthesis of all monoamine neurotransmitters and inhibits that of gamma-aminobutyric acid (GABA). Osteocalcin also crosses the placenta during pregnancy and maternal osteocalcin is required for fetal brain development.</text>
</comment>
<comment type="subcellular location">
    <subcellularLocation>
        <location evidence="5">Secreted</location>
    </subcellularLocation>
</comment>
<comment type="PTM">
    <text evidence="5 6">Gamma-carboxyglutamate residues are formed by vitamin K dependent carboxylation by GGCX. These residues are essential for the binding of calcium (By similarity). Decarboxylation promotes the hormone activity (By similarity).</text>
</comment>
<comment type="similarity">
    <text evidence="8">Belongs to the osteocalcin/matrix Gla protein family.</text>
</comment>
<protein>
    <recommendedName>
        <fullName>Osteocalcin</fullName>
    </recommendedName>
    <alternativeName>
        <fullName>Bone Gla protein</fullName>
        <shortName>BGP</shortName>
    </alternativeName>
    <alternativeName>
        <fullName>Gamma-carboxyglutamic acid-containing protein</fullName>
    </alternativeName>
</protein>
<gene>
    <name evidence="2" type="primary">BGLAP</name>
</gene>
<sequence length="100" mass="10967">MRALTLLALLALAALCIAGQAGAKPSGAESSKGAAFVSKQEGSEVVKRPRRYLYQWLGAPVPYPDTLEPRREVCELNPDCDELADHIGFQEAYRRFYGPV</sequence>
<dbReference type="EMBL" id="DQ977353">
    <property type="protein sequence ID" value="ABM91969.1"/>
    <property type="molecule type" value="Genomic_DNA"/>
</dbReference>
<dbReference type="RefSeq" id="NP_001129100.1">
    <property type="nucleotide sequence ID" value="NM_001135628.1"/>
</dbReference>
<dbReference type="RefSeq" id="XP_016784372.1">
    <property type="nucleotide sequence ID" value="XM_016928883.1"/>
</dbReference>
<dbReference type="SMR" id="P84348"/>
<dbReference type="FunCoup" id="P84348">
    <property type="interactions" value="114"/>
</dbReference>
<dbReference type="STRING" id="9598.ENSPTRP00000002450"/>
<dbReference type="PaxDb" id="9598-ENSPTRP00000002450"/>
<dbReference type="Ensembl" id="ENSPTRT00000002667.6">
    <property type="protein sequence ID" value="ENSPTRP00000002450.5"/>
    <property type="gene ID" value="ENSPTRG00000041553.2"/>
</dbReference>
<dbReference type="GeneID" id="100190891"/>
<dbReference type="KEGG" id="ptr:100190891"/>
<dbReference type="CTD" id="632"/>
<dbReference type="VGNC" id="VGNC:8149">
    <property type="gene designation" value="BGLAP"/>
</dbReference>
<dbReference type="eggNOG" id="ENOG502S85I">
    <property type="taxonomic scope" value="Eukaryota"/>
</dbReference>
<dbReference type="GeneTree" id="ENSGT00410000026290"/>
<dbReference type="HOGENOM" id="CLU_160110_0_0_1"/>
<dbReference type="InParanoid" id="P84348"/>
<dbReference type="OMA" id="MDTEGII"/>
<dbReference type="OrthoDB" id="8079at9604"/>
<dbReference type="TreeFam" id="TF330920"/>
<dbReference type="Proteomes" id="UP000002277">
    <property type="component" value="Chromosome 1"/>
</dbReference>
<dbReference type="Bgee" id="ENSPTRG00000041553">
    <property type="expression patterns" value="Expressed in cerebellar cortex and 20 other cell types or tissues"/>
</dbReference>
<dbReference type="GO" id="GO:0005737">
    <property type="term" value="C:cytoplasm"/>
    <property type="evidence" value="ECO:0000250"/>
    <property type="project" value="UniProtKB"/>
</dbReference>
<dbReference type="GO" id="GO:0005576">
    <property type="term" value="C:extracellular region"/>
    <property type="evidence" value="ECO:0000318"/>
    <property type="project" value="GO_Central"/>
</dbReference>
<dbReference type="GO" id="GO:0005509">
    <property type="term" value="F:calcium ion binding"/>
    <property type="evidence" value="ECO:0007669"/>
    <property type="project" value="InterPro"/>
</dbReference>
<dbReference type="GO" id="GO:0005179">
    <property type="term" value="F:hormone activity"/>
    <property type="evidence" value="ECO:0000250"/>
    <property type="project" value="UniProtKB"/>
</dbReference>
<dbReference type="GO" id="GO:0046848">
    <property type="term" value="F:hydroxyapatite binding"/>
    <property type="evidence" value="ECO:0000318"/>
    <property type="project" value="GO_Central"/>
</dbReference>
<dbReference type="GO" id="GO:0008147">
    <property type="term" value="F:structural constituent of bone"/>
    <property type="evidence" value="ECO:0000250"/>
    <property type="project" value="UniProtKB"/>
</dbReference>
<dbReference type="GO" id="GO:0031214">
    <property type="term" value="P:biomineral tissue development"/>
    <property type="evidence" value="ECO:0007669"/>
    <property type="project" value="UniProtKB-KW"/>
</dbReference>
<dbReference type="GO" id="GO:0060348">
    <property type="term" value="P:bone development"/>
    <property type="evidence" value="ECO:0000318"/>
    <property type="project" value="GO_Central"/>
</dbReference>
<dbReference type="GO" id="GO:0007420">
    <property type="term" value="P:brain development"/>
    <property type="evidence" value="ECO:0000250"/>
    <property type="project" value="UniProtKB"/>
</dbReference>
<dbReference type="GO" id="GO:0032869">
    <property type="term" value="P:cellular response to insulin stimulus"/>
    <property type="evidence" value="ECO:0000250"/>
    <property type="project" value="UniProtKB"/>
</dbReference>
<dbReference type="GO" id="GO:0050890">
    <property type="term" value="P:cognition"/>
    <property type="evidence" value="ECO:0000250"/>
    <property type="project" value="UniProtKB"/>
</dbReference>
<dbReference type="GO" id="GO:0042593">
    <property type="term" value="P:glucose homeostasis"/>
    <property type="evidence" value="ECO:0000250"/>
    <property type="project" value="UniProtKB"/>
</dbReference>
<dbReference type="GO" id="GO:0007611">
    <property type="term" value="P:learning or memory"/>
    <property type="evidence" value="ECO:0000250"/>
    <property type="project" value="UniProtKB"/>
</dbReference>
<dbReference type="GO" id="GO:1903011">
    <property type="term" value="P:negative regulation of bone development"/>
    <property type="evidence" value="ECO:0000250"/>
    <property type="project" value="UniProtKB"/>
</dbReference>
<dbReference type="GO" id="GO:0001649">
    <property type="term" value="P:osteoblast differentiation"/>
    <property type="evidence" value="ECO:0000318"/>
    <property type="project" value="GO_Central"/>
</dbReference>
<dbReference type="GO" id="GO:0001956">
    <property type="term" value="P:positive regulation of neurotransmitter secretion"/>
    <property type="evidence" value="ECO:0000250"/>
    <property type="project" value="UniProtKB"/>
</dbReference>
<dbReference type="GO" id="GO:0030500">
    <property type="term" value="P:regulation of bone mineralization"/>
    <property type="evidence" value="ECO:0007669"/>
    <property type="project" value="InterPro"/>
</dbReference>
<dbReference type="GO" id="GO:1900076">
    <property type="term" value="P:regulation of cellular response to insulin stimulus"/>
    <property type="evidence" value="ECO:0007669"/>
    <property type="project" value="InterPro"/>
</dbReference>
<dbReference type="GO" id="GO:2000224">
    <property type="term" value="P:regulation of testosterone biosynthetic process"/>
    <property type="evidence" value="ECO:0000250"/>
    <property type="project" value="UniProtKB"/>
</dbReference>
<dbReference type="GO" id="GO:0032571">
    <property type="term" value="P:response to vitamin K"/>
    <property type="evidence" value="ECO:0007669"/>
    <property type="project" value="InterPro"/>
</dbReference>
<dbReference type="GO" id="GO:0044342">
    <property type="term" value="P:type B pancreatic cell proliferation"/>
    <property type="evidence" value="ECO:0000250"/>
    <property type="project" value="UniProtKB"/>
</dbReference>
<dbReference type="InterPro" id="IPR035972">
    <property type="entry name" value="GLA-like_dom_SF"/>
</dbReference>
<dbReference type="InterPro" id="IPR000294">
    <property type="entry name" value="GLA_domain"/>
</dbReference>
<dbReference type="InterPro" id="IPR039176">
    <property type="entry name" value="Osteocalcin"/>
</dbReference>
<dbReference type="InterPro" id="IPR002384">
    <property type="entry name" value="Osteocalcin/MGP"/>
</dbReference>
<dbReference type="PANTHER" id="PTHR14235">
    <property type="entry name" value="OSTEOCALCIN"/>
    <property type="match status" value="1"/>
</dbReference>
<dbReference type="PANTHER" id="PTHR14235:SF0">
    <property type="entry name" value="OSTEOCALCIN"/>
    <property type="match status" value="1"/>
</dbReference>
<dbReference type="PRINTS" id="PR00002">
    <property type="entry name" value="GLABONE"/>
</dbReference>
<dbReference type="SMART" id="SM00069">
    <property type="entry name" value="GLA"/>
    <property type="match status" value="1"/>
</dbReference>
<dbReference type="SUPFAM" id="SSF57630">
    <property type="entry name" value="GLA-domain"/>
    <property type="match status" value="1"/>
</dbReference>
<dbReference type="PROSITE" id="PS00011">
    <property type="entry name" value="GLA_1"/>
    <property type="match status" value="1"/>
</dbReference>
<dbReference type="PROSITE" id="PS50998">
    <property type="entry name" value="GLA_2"/>
    <property type="match status" value="1"/>
</dbReference>
<accession>P84348</accession>
<accession>A2T714</accession>
<proteinExistence type="evidence at protein level"/>
<evidence type="ECO:0000250" key="1">
    <source>
        <dbReference type="UniProtKB" id="P02818"/>
    </source>
</evidence>
<evidence type="ECO:0000250" key="2">
    <source>
        <dbReference type="UniProtKB" id="P02819"/>
    </source>
</evidence>
<evidence type="ECO:0000250" key="3">
    <source>
        <dbReference type="UniProtKB" id="P02820"/>
    </source>
</evidence>
<evidence type="ECO:0000250" key="4">
    <source>
        <dbReference type="UniProtKB" id="P83489"/>
    </source>
</evidence>
<evidence type="ECO:0000250" key="5">
    <source>
        <dbReference type="UniProtKB" id="P86546"/>
    </source>
</evidence>
<evidence type="ECO:0000255" key="6">
    <source>
        <dbReference type="PROSITE-ProRule" id="PRU00463"/>
    </source>
</evidence>
<evidence type="ECO:0000269" key="7">
    <source>
    </source>
</evidence>
<evidence type="ECO:0000305" key="8"/>
<keyword id="KW-0091">Biomineralization</keyword>
<keyword id="KW-0106">Calcium</keyword>
<keyword id="KW-0165">Cleavage on pair of basic residues</keyword>
<keyword id="KW-0903">Direct protein sequencing</keyword>
<keyword id="KW-1015">Disulfide bond</keyword>
<keyword id="KW-0301">Gamma-carboxyglutamic acid</keyword>
<keyword id="KW-0372">Hormone</keyword>
<keyword id="KW-0479">Metal-binding</keyword>
<keyword id="KW-1185">Reference proteome</keyword>
<keyword id="KW-0964">Secreted</keyword>
<keyword id="KW-0732">Signal</keyword>